<protein>
    <recommendedName>
        <fullName evidence="1">Dihydroxy-acid dehydratase</fullName>
        <shortName evidence="1">DAD</shortName>
        <ecNumber evidence="1">4.2.1.9</ecNumber>
    </recommendedName>
</protein>
<reference key="1">
    <citation type="submission" date="2008-02" db="EMBL/GenBank/DDBJ databases">
        <title>Complete sequence of Escherichia coli C str. ATCC 8739.</title>
        <authorList>
            <person name="Copeland A."/>
            <person name="Lucas S."/>
            <person name="Lapidus A."/>
            <person name="Glavina del Rio T."/>
            <person name="Dalin E."/>
            <person name="Tice H."/>
            <person name="Bruce D."/>
            <person name="Goodwin L."/>
            <person name="Pitluck S."/>
            <person name="Kiss H."/>
            <person name="Brettin T."/>
            <person name="Detter J.C."/>
            <person name="Han C."/>
            <person name="Kuske C.R."/>
            <person name="Schmutz J."/>
            <person name="Larimer F."/>
            <person name="Land M."/>
            <person name="Hauser L."/>
            <person name="Kyrpides N."/>
            <person name="Mikhailova N."/>
            <person name="Ingram L."/>
            <person name="Richardson P."/>
        </authorList>
    </citation>
    <scope>NUCLEOTIDE SEQUENCE [LARGE SCALE GENOMIC DNA]</scope>
    <source>
        <strain>ATCC 8739 / DSM 1576 / NBRC 3972 / NCIMB 8545 / WDCM 00012 / Crooks</strain>
    </source>
</reference>
<feature type="chain" id="PRO_1000073976" description="Dihydroxy-acid dehydratase">
    <location>
        <begin position="1"/>
        <end position="616"/>
    </location>
</feature>
<feature type="active site" description="Proton acceptor" evidence="1">
    <location>
        <position position="517"/>
    </location>
</feature>
<feature type="binding site" evidence="1">
    <location>
        <position position="81"/>
    </location>
    <ligand>
        <name>Mg(2+)</name>
        <dbReference type="ChEBI" id="CHEBI:18420"/>
    </ligand>
</feature>
<feature type="binding site" evidence="1">
    <location>
        <position position="122"/>
    </location>
    <ligand>
        <name>[2Fe-2S] cluster</name>
        <dbReference type="ChEBI" id="CHEBI:190135"/>
    </ligand>
</feature>
<feature type="binding site" evidence="1">
    <location>
        <position position="123"/>
    </location>
    <ligand>
        <name>Mg(2+)</name>
        <dbReference type="ChEBI" id="CHEBI:18420"/>
    </ligand>
</feature>
<feature type="binding site" description="via carbamate group" evidence="1">
    <location>
        <position position="124"/>
    </location>
    <ligand>
        <name>Mg(2+)</name>
        <dbReference type="ChEBI" id="CHEBI:18420"/>
    </ligand>
</feature>
<feature type="binding site" evidence="1">
    <location>
        <position position="195"/>
    </location>
    <ligand>
        <name>[2Fe-2S] cluster</name>
        <dbReference type="ChEBI" id="CHEBI:190135"/>
    </ligand>
</feature>
<feature type="binding site" evidence="1">
    <location>
        <position position="491"/>
    </location>
    <ligand>
        <name>Mg(2+)</name>
        <dbReference type="ChEBI" id="CHEBI:18420"/>
    </ligand>
</feature>
<feature type="modified residue" description="N6-carboxylysine" evidence="1">
    <location>
        <position position="124"/>
    </location>
</feature>
<keyword id="KW-0001">2Fe-2S</keyword>
<keyword id="KW-0028">Amino-acid biosynthesis</keyword>
<keyword id="KW-0100">Branched-chain amino acid biosynthesis</keyword>
<keyword id="KW-0408">Iron</keyword>
<keyword id="KW-0411">Iron-sulfur</keyword>
<keyword id="KW-0456">Lyase</keyword>
<keyword id="KW-0460">Magnesium</keyword>
<keyword id="KW-0479">Metal-binding</keyword>
<evidence type="ECO:0000255" key="1">
    <source>
        <dbReference type="HAMAP-Rule" id="MF_00012"/>
    </source>
</evidence>
<organism>
    <name type="scientific">Escherichia coli (strain ATCC 8739 / DSM 1576 / NBRC 3972 / NCIMB 8545 / WDCM 00012 / Crooks)</name>
    <dbReference type="NCBI Taxonomy" id="481805"/>
    <lineage>
        <taxon>Bacteria</taxon>
        <taxon>Pseudomonadati</taxon>
        <taxon>Pseudomonadota</taxon>
        <taxon>Gammaproteobacteria</taxon>
        <taxon>Enterobacterales</taxon>
        <taxon>Enterobacteriaceae</taxon>
        <taxon>Escherichia</taxon>
    </lineage>
</organism>
<name>ILVD_ECOLC</name>
<gene>
    <name evidence="1" type="primary">ilvD</name>
    <name type="ordered locus">EcolC_4231</name>
</gene>
<accession>B1IWX5</accession>
<sequence length="616" mass="65560">MPKYRSATTTHGRNMAGARALWRATGMTDADFGKPIIAVVNSFTQFVPGHVHLRDLGKLVAEQIEAAGGVAKEFNTIAVDDGIAMGHGGMLYSLPSRELIADSVEYMVNAHCADAMVCISNCDKITPGMLMASLRLNIPVIFVSGGPMEAGKTKLSDRIIKLDLVDAMIQGADPKVSDSQSDQVERSACPTCGSCSGMFTANSMNCLTEALGLSQPGNGSLLATHADRKQLFLNAGKRIVELTKRYYEQNDESALPRNIASKAAFENAMTLDIAMGGSTNTVLHLLAAAQEAEIDFTMSDIDKLSRKVPQLCKVAPSTQKYHMEDVHRAGGVIGILGELDRAGLLNRDVKNVLGLTLPQTLEQYDVMLTQDDAVKNMFRAGPAGIRTTQAFSQDCRWDSLDDDRANGCIRSLEHAYSKDGGLAVLYGNFAENGCIVKTAGVDDSILKFTGPAKVYESQDDAVEAILGGKVVAGDVVVIRYEGPKGGPGMQEMLYPTSFLKSMGLGKACALITDGRFSGGTSGLSIGHVSPEAASGGSIGLIEDGDLIAIDIPNRGIQLQVSDAELAARREAQEARGDKAWTPKNRERQVSFALRAYASLATSADKGAVRDKSKLGG</sequence>
<dbReference type="EC" id="4.2.1.9" evidence="1"/>
<dbReference type="EMBL" id="CP000946">
    <property type="protein sequence ID" value="ACA79827.1"/>
    <property type="molecule type" value="Genomic_DNA"/>
</dbReference>
<dbReference type="RefSeq" id="WP_001127419.1">
    <property type="nucleotide sequence ID" value="NZ_MTFT01000015.1"/>
</dbReference>
<dbReference type="SMR" id="B1IWX5"/>
<dbReference type="KEGG" id="ecl:EcolC_4231"/>
<dbReference type="HOGENOM" id="CLU_014271_4_2_6"/>
<dbReference type="UniPathway" id="UPA00047">
    <property type="reaction ID" value="UER00057"/>
</dbReference>
<dbReference type="UniPathway" id="UPA00049">
    <property type="reaction ID" value="UER00061"/>
</dbReference>
<dbReference type="GO" id="GO:0005829">
    <property type="term" value="C:cytosol"/>
    <property type="evidence" value="ECO:0007669"/>
    <property type="project" value="TreeGrafter"/>
</dbReference>
<dbReference type="GO" id="GO:0051537">
    <property type="term" value="F:2 iron, 2 sulfur cluster binding"/>
    <property type="evidence" value="ECO:0007669"/>
    <property type="project" value="UniProtKB-UniRule"/>
</dbReference>
<dbReference type="GO" id="GO:0004160">
    <property type="term" value="F:dihydroxy-acid dehydratase activity"/>
    <property type="evidence" value="ECO:0007669"/>
    <property type="project" value="UniProtKB-UniRule"/>
</dbReference>
<dbReference type="GO" id="GO:0000287">
    <property type="term" value="F:magnesium ion binding"/>
    <property type="evidence" value="ECO:0007669"/>
    <property type="project" value="UniProtKB-UniRule"/>
</dbReference>
<dbReference type="GO" id="GO:0009097">
    <property type="term" value="P:isoleucine biosynthetic process"/>
    <property type="evidence" value="ECO:0007669"/>
    <property type="project" value="UniProtKB-UniRule"/>
</dbReference>
<dbReference type="GO" id="GO:0009099">
    <property type="term" value="P:L-valine biosynthetic process"/>
    <property type="evidence" value="ECO:0007669"/>
    <property type="project" value="UniProtKB-UniRule"/>
</dbReference>
<dbReference type="FunFam" id="3.50.30.80:FF:000001">
    <property type="entry name" value="Dihydroxy-acid dehydratase"/>
    <property type="match status" value="1"/>
</dbReference>
<dbReference type="Gene3D" id="3.50.30.80">
    <property type="entry name" value="IlvD/EDD C-terminal domain-like"/>
    <property type="match status" value="1"/>
</dbReference>
<dbReference type="HAMAP" id="MF_00012">
    <property type="entry name" value="IlvD"/>
    <property type="match status" value="1"/>
</dbReference>
<dbReference type="InterPro" id="IPR042096">
    <property type="entry name" value="Dihydro-acid_dehy_C"/>
</dbReference>
<dbReference type="InterPro" id="IPR004404">
    <property type="entry name" value="DihydroxyA_deHydtase"/>
</dbReference>
<dbReference type="InterPro" id="IPR020558">
    <property type="entry name" value="DiOHA_6PGluconate_deHydtase_CS"/>
</dbReference>
<dbReference type="InterPro" id="IPR056740">
    <property type="entry name" value="ILV_EDD_C"/>
</dbReference>
<dbReference type="InterPro" id="IPR000581">
    <property type="entry name" value="ILV_EDD_N"/>
</dbReference>
<dbReference type="InterPro" id="IPR037237">
    <property type="entry name" value="IlvD/EDD_N"/>
</dbReference>
<dbReference type="NCBIfam" id="TIGR00110">
    <property type="entry name" value="ilvD"/>
    <property type="match status" value="1"/>
</dbReference>
<dbReference type="NCBIfam" id="NF009103">
    <property type="entry name" value="PRK12448.1"/>
    <property type="match status" value="1"/>
</dbReference>
<dbReference type="PANTHER" id="PTHR43661">
    <property type="entry name" value="D-XYLONATE DEHYDRATASE"/>
    <property type="match status" value="1"/>
</dbReference>
<dbReference type="PANTHER" id="PTHR43661:SF3">
    <property type="entry name" value="D-XYLONATE DEHYDRATASE YAGF-RELATED"/>
    <property type="match status" value="1"/>
</dbReference>
<dbReference type="Pfam" id="PF24877">
    <property type="entry name" value="ILV_EDD_C"/>
    <property type="match status" value="1"/>
</dbReference>
<dbReference type="Pfam" id="PF00920">
    <property type="entry name" value="ILVD_EDD_N"/>
    <property type="match status" value="1"/>
</dbReference>
<dbReference type="SUPFAM" id="SSF143975">
    <property type="entry name" value="IlvD/EDD N-terminal domain-like"/>
    <property type="match status" value="1"/>
</dbReference>
<dbReference type="SUPFAM" id="SSF52016">
    <property type="entry name" value="LeuD/IlvD-like"/>
    <property type="match status" value="1"/>
</dbReference>
<dbReference type="PROSITE" id="PS00886">
    <property type="entry name" value="ILVD_EDD_1"/>
    <property type="match status" value="1"/>
</dbReference>
<dbReference type="PROSITE" id="PS00887">
    <property type="entry name" value="ILVD_EDD_2"/>
    <property type="match status" value="1"/>
</dbReference>
<proteinExistence type="inferred from homology"/>
<comment type="function">
    <text evidence="1">Functions in the biosynthesis of branched-chain amino acids. Catalyzes the dehydration of (2R,3R)-2,3-dihydroxy-3-methylpentanoate (2,3-dihydroxy-3-methylvalerate) into 2-oxo-3-methylpentanoate (2-oxo-3-methylvalerate) and of (2R)-2,3-dihydroxy-3-methylbutanoate (2,3-dihydroxyisovalerate) into 2-oxo-3-methylbutanoate (2-oxoisovalerate), the penultimate precursor to L-isoleucine and L-valine, respectively.</text>
</comment>
<comment type="catalytic activity">
    <reaction evidence="1">
        <text>(2R)-2,3-dihydroxy-3-methylbutanoate = 3-methyl-2-oxobutanoate + H2O</text>
        <dbReference type="Rhea" id="RHEA:24809"/>
        <dbReference type="ChEBI" id="CHEBI:11851"/>
        <dbReference type="ChEBI" id="CHEBI:15377"/>
        <dbReference type="ChEBI" id="CHEBI:49072"/>
        <dbReference type="EC" id="4.2.1.9"/>
    </reaction>
    <physiologicalReaction direction="left-to-right" evidence="1">
        <dbReference type="Rhea" id="RHEA:24810"/>
    </physiologicalReaction>
</comment>
<comment type="catalytic activity">
    <reaction evidence="1">
        <text>(2R,3R)-2,3-dihydroxy-3-methylpentanoate = (S)-3-methyl-2-oxopentanoate + H2O</text>
        <dbReference type="Rhea" id="RHEA:27694"/>
        <dbReference type="ChEBI" id="CHEBI:15377"/>
        <dbReference type="ChEBI" id="CHEBI:35146"/>
        <dbReference type="ChEBI" id="CHEBI:49258"/>
        <dbReference type="EC" id="4.2.1.9"/>
    </reaction>
    <physiologicalReaction direction="left-to-right" evidence="1">
        <dbReference type="Rhea" id="RHEA:27695"/>
    </physiologicalReaction>
</comment>
<comment type="cofactor">
    <cofactor evidence="1">
        <name>[2Fe-2S] cluster</name>
        <dbReference type="ChEBI" id="CHEBI:190135"/>
    </cofactor>
    <text evidence="1">Binds 1 [2Fe-2S] cluster per subunit. This cluster acts as a Lewis acid cofactor.</text>
</comment>
<comment type="cofactor">
    <cofactor evidence="1">
        <name>Mg(2+)</name>
        <dbReference type="ChEBI" id="CHEBI:18420"/>
    </cofactor>
</comment>
<comment type="pathway">
    <text evidence="1">Amino-acid biosynthesis; L-isoleucine biosynthesis; L-isoleucine from 2-oxobutanoate: step 3/4.</text>
</comment>
<comment type="pathway">
    <text evidence="1">Amino-acid biosynthesis; L-valine biosynthesis; L-valine from pyruvate: step 3/4.</text>
</comment>
<comment type="subunit">
    <text evidence="1">Homodimer.</text>
</comment>
<comment type="similarity">
    <text evidence="1">Belongs to the IlvD/Edd family.</text>
</comment>